<feature type="signal peptide" description="Tat-type signal" evidence="1">
    <location>
        <begin position="1"/>
        <end position="32"/>
    </location>
</feature>
<feature type="chain" id="PRO_1000186365" description="Periplasmic nitrate reductase" evidence="1">
    <location>
        <begin position="33"/>
        <end position="827"/>
    </location>
</feature>
<feature type="domain" description="4Fe-4S Mo/W bis-MGD-type" evidence="1">
    <location>
        <begin position="37"/>
        <end position="93"/>
    </location>
</feature>
<feature type="binding site" evidence="1">
    <location>
        <position position="44"/>
    </location>
    <ligand>
        <name>[4Fe-4S] cluster</name>
        <dbReference type="ChEBI" id="CHEBI:49883"/>
    </ligand>
</feature>
<feature type="binding site" evidence="1">
    <location>
        <position position="47"/>
    </location>
    <ligand>
        <name>[4Fe-4S] cluster</name>
        <dbReference type="ChEBI" id="CHEBI:49883"/>
    </ligand>
</feature>
<feature type="binding site" evidence="1">
    <location>
        <position position="51"/>
    </location>
    <ligand>
        <name>[4Fe-4S] cluster</name>
        <dbReference type="ChEBI" id="CHEBI:49883"/>
    </ligand>
</feature>
<feature type="binding site" evidence="1">
    <location>
        <position position="79"/>
    </location>
    <ligand>
        <name>[4Fe-4S] cluster</name>
        <dbReference type="ChEBI" id="CHEBI:49883"/>
    </ligand>
</feature>
<feature type="binding site" evidence="1">
    <location>
        <position position="81"/>
    </location>
    <ligand>
        <name>Mo-bis(molybdopterin guanine dinucleotide)</name>
        <dbReference type="ChEBI" id="CHEBI:60539"/>
    </ligand>
</feature>
<feature type="binding site" evidence="1">
    <location>
        <position position="148"/>
    </location>
    <ligand>
        <name>Mo-bis(molybdopterin guanine dinucleotide)</name>
        <dbReference type="ChEBI" id="CHEBI:60539"/>
    </ligand>
</feature>
<feature type="binding site" evidence="1">
    <location>
        <position position="173"/>
    </location>
    <ligand>
        <name>Mo-bis(molybdopterin guanine dinucleotide)</name>
        <dbReference type="ChEBI" id="CHEBI:60539"/>
    </ligand>
</feature>
<feature type="binding site" evidence="1">
    <location>
        <position position="177"/>
    </location>
    <ligand>
        <name>Mo-bis(molybdopterin guanine dinucleotide)</name>
        <dbReference type="ChEBI" id="CHEBI:60539"/>
    </ligand>
</feature>
<feature type="binding site" evidence="1">
    <location>
        <begin position="210"/>
        <end position="217"/>
    </location>
    <ligand>
        <name>Mo-bis(molybdopterin guanine dinucleotide)</name>
        <dbReference type="ChEBI" id="CHEBI:60539"/>
    </ligand>
</feature>
<feature type="binding site" evidence="1">
    <location>
        <begin position="241"/>
        <end position="245"/>
    </location>
    <ligand>
        <name>Mo-bis(molybdopterin guanine dinucleotide)</name>
        <dbReference type="ChEBI" id="CHEBI:60539"/>
    </ligand>
</feature>
<feature type="binding site" evidence="1">
    <location>
        <position position="371"/>
    </location>
    <ligand>
        <name>Mo-bis(molybdopterin guanine dinucleotide)</name>
        <dbReference type="ChEBI" id="CHEBI:60539"/>
    </ligand>
</feature>
<feature type="binding site" evidence="1">
    <location>
        <position position="375"/>
    </location>
    <ligand>
        <name>Mo-bis(molybdopterin guanine dinucleotide)</name>
        <dbReference type="ChEBI" id="CHEBI:60539"/>
    </ligand>
</feature>
<feature type="binding site" evidence="1">
    <location>
        <position position="481"/>
    </location>
    <ligand>
        <name>Mo-bis(molybdopterin guanine dinucleotide)</name>
        <dbReference type="ChEBI" id="CHEBI:60539"/>
    </ligand>
</feature>
<feature type="binding site" evidence="1">
    <location>
        <begin position="507"/>
        <end position="508"/>
    </location>
    <ligand>
        <name>Mo-bis(molybdopterin guanine dinucleotide)</name>
        <dbReference type="ChEBI" id="CHEBI:60539"/>
    </ligand>
</feature>
<feature type="binding site" evidence="1">
    <location>
        <position position="530"/>
    </location>
    <ligand>
        <name>Mo-bis(molybdopterin guanine dinucleotide)</name>
        <dbReference type="ChEBI" id="CHEBI:60539"/>
    </ligand>
</feature>
<feature type="binding site" evidence="1">
    <location>
        <position position="557"/>
    </location>
    <ligand>
        <name>Mo-bis(molybdopterin guanine dinucleotide)</name>
        <dbReference type="ChEBI" id="CHEBI:60539"/>
    </ligand>
</feature>
<feature type="binding site" evidence="1">
    <location>
        <begin position="717"/>
        <end position="726"/>
    </location>
    <ligand>
        <name>Mo-bis(molybdopterin guanine dinucleotide)</name>
        <dbReference type="ChEBI" id="CHEBI:60539"/>
    </ligand>
</feature>
<feature type="binding site" evidence="1">
    <location>
        <position position="793"/>
    </location>
    <ligand>
        <name>substrate</name>
    </ligand>
</feature>
<feature type="binding site" evidence="1">
    <location>
        <position position="801"/>
    </location>
    <ligand>
        <name>Mo-bis(molybdopterin guanine dinucleotide)</name>
        <dbReference type="ChEBI" id="CHEBI:60539"/>
    </ligand>
</feature>
<feature type="binding site" evidence="1">
    <location>
        <position position="818"/>
    </location>
    <ligand>
        <name>Mo-bis(molybdopterin guanine dinucleotide)</name>
        <dbReference type="ChEBI" id="CHEBI:60539"/>
    </ligand>
</feature>
<reference key="1">
    <citation type="journal article" date="2009" name="J. Bacteriol.">
        <title>Complete genome sequence of Haemophilus parasuis SH0165.</title>
        <authorList>
            <person name="Yue M."/>
            <person name="Yang F."/>
            <person name="Yang J."/>
            <person name="Bei W."/>
            <person name="Cai X."/>
            <person name="Chen L."/>
            <person name="Dong J."/>
            <person name="Zhou R."/>
            <person name="Jin M."/>
            <person name="Jin Q."/>
            <person name="Chen H."/>
        </authorList>
    </citation>
    <scope>NUCLEOTIDE SEQUENCE [LARGE SCALE GENOMIC DNA]</scope>
    <source>
        <strain>SH0165</strain>
    </source>
</reference>
<gene>
    <name evidence="1" type="primary">napA</name>
    <name type="ordered locus">HAPS_1794</name>
</gene>
<name>NAPA_GLAP5</name>
<sequence length="827" mass="92969">MELNRRDFMKANAAAAAALAAGITLPVKNVYANDNSIKWDKAPCRFCGTGCSVLVGTQNGRMVASQGDPDAEVNRGLNCIKGYFLPKIIYGKDRLTSPMLRMKDGKYDKNGEFTPVSWDQAFTIMAEKFKKAIKEQGPNGVGMFTSGQSTIFEGVAKSKLFKAGLRSNNIDPNARHCMASAAVAFMRTFGMDEPMGCYDDIEKADAFVLWGSNMAEMHPILWSRISDRRLSKQDAKVAVLSTFEHRSFELADLPIVFKPQGDLAIMNYIANYLIQNNAIDQDFIQKHTKFKRGETDIGYGLRDNHPLEQAAKNAKTAGKMHDSSFEEFKQLVSEYTLDKAHELSGVPKDQLESLAKMYADPNLNIVSFWTMGFNQHVRGVWANHLIYNIHLLTGKISKPGCGPFSLTGQPSACGTAREVGTFIHRLPADLVVTNPEHVKTAEKLWKLPNGVIQTKVGLHAVAQDRALKDGKLNAYWVMCNNNMQCGPNINQERMPGWRDERNFIVVSDPYPTVSALSADLILPTAMWVEKEGAYGNAERRTQFWFQQVKAPGEAKSDLWQLVEFSKYFTTDEMWPAEVLAANPEYKGKTLFDVLYRNGQVDKFQVPADKAGYINDEADHFGFYLQKGLFEEYAEFGRGHGHDLASFETYHKARGLRWPVVDGKETLWRYREGYDPYVQAGEGVSFYGNKDKRAVILAVPYEPPAEAPDAEYDLWLSTGRVLEHWHSGSMTRRVPELHRSFPNNLVWMHPTDAQKRGLRHGDKVKVISRRGEMISHLDTRGRNKVPEGLIYTTFFDAGQLANKLTLDATDPISKETDFKKCAVKVVKA</sequence>
<organism>
    <name type="scientific">Glaesserella parasuis serovar 5 (strain SH0165)</name>
    <name type="common">Haemophilus parasuis</name>
    <dbReference type="NCBI Taxonomy" id="557723"/>
    <lineage>
        <taxon>Bacteria</taxon>
        <taxon>Pseudomonadati</taxon>
        <taxon>Pseudomonadota</taxon>
        <taxon>Gammaproteobacteria</taxon>
        <taxon>Pasteurellales</taxon>
        <taxon>Pasteurellaceae</taxon>
        <taxon>Glaesserella</taxon>
    </lineage>
</organism>
<proteinExistence type="inferred from homology"/>
<protein>
    <recommendedName>
        <fullName evidence="1">Periplasmic nitrate reductase</fullName>
        <ecNumber evidence="1">1.9.6.1</ecNumber>
    </recommendedName>
</protein>
<comment type="function">
    <text evidence="1">Catalytic subunit of the periplasmic nitrate reductase complex NapAB. Receives electrons from NapB and catalyzes the reduction of nitrate to nitrite.</text>
</comment>
<comment type="catalytic activity">
    <reaction evidence="1">
        <text>2 Fe(II)-[cytochrome] + nitrate + 2 H(+) = 2 Fe(III)-[cytochrome] + nitrite + H2O</text>
        <dbReference type="Rhea" id="RHEA:12909"/>
        <dbReference type="Rhea" id="RHEA-COMP:11777"/>
        <dbReference type="Rhea" id="RHEA-COMP:11778"/>
        <dbReference type="ChEBI" id="CHEBI:15377"/>
        <dbReference type="ChEBI" id="CHEBI:15378"/>
        <dbReference type="ChEBI" id="CHEBI:16301"/>
        <dbReference type="ChEBI" id="CHEBI:17632"/>
        <dbReference type="ChEBI" id="CHEBI:29033"/>
        <dbReference type="ChEBI" id="CHEBI:29034"/>
        <dbReference type="EC" id="1.9.6.1"/>
    </reaction>
</comment>
<comment type="cofactor">
    <cofactor evidence="1">
        <name>[4Fe-4S] cluster</name>
        <dbReference type="ChEBI" id="CHEBI:49883"/>
    </cofactor>
    <text evidence="1">Binds 1 [4Fe-4S] cluster.</text>
</comment>
<comment type="cofactor">
    <cofactor evidence="1">
        <name>Mo-bis(molybdopterin guanine dinucleotide)</name>
        <dbReference type="ChEBI" id="CHEBI:60539"/>
    </cofactor>
    <text evidence="1">Binds 1 molybdenum-bis(molybdopterin guanine dinucleotide) (Mo-bis-MGD) cofactor per subunit.</text>
</comment>
<comment type="subunit">
    <text evidence="1">Component of the periplasmic nitrate reductase NapAB complex composed of NapA and NapB.</text>
</comment>
<comment type="subcellular location">
    <subcellularLocation>
        <location evidence="1">Periplasm</location>
    </subcellularLocation>
</comment>
<comment type="PTM">
    <text evidence="1">Predicted to be exported by the Tat system. The position of the signal peptide cleavage has not been experimentally proven.</text>
</comment>
<comment type="similarity">
    <text evidence="1">Belongs to the prokaryotic molybdopterin-containing oxidoreductase family. NasA/NapA/NarB subfamily.</text>
</comment>
<dbReference type="EC" id="1.9.6.1" evidence="1"/>
<dbReference type="EMBL" id="CP001321">
    <property type="protein sequence ID" value="ACL33304.1"/>
    <property type="molecule type" value="Genomic_DNA"/>
</dbReference>
<dbReference type="RefSeq" id="WP_010786603.1">
    <property type="nucleotide sequence ID" value="NC_011852.1"/>
</dbReference>
<dbReference type="SMR" id="B8F7K2"/>
<dbReference type="STRING" id="557723.HAPS_1794"/>
<dbReference type="KEGG" id="hap:HAPS_1794"/>
<dbReference type="PATRIC" id="fig|557723.8.peg.1775"/>
<dbReference type="HOGENOM" id="CLU_000422_13_4_6"/>
<dbReference type="Proteomes" id="UP000006743">
    <property type="component" value="Chromosome"/>
</dbReference>
<dbReference type="GO" id="GO:0016020">
    <property type="term" value="C:membrane"/>
    <property type="evidence" value="ECO:0007669"/>
    <property type="project" value="TreeGrafter"/>
</dbReference>
<dbReference type="GO" id="GO:0009325">
    <property type="term" value="C:nitrate reductase complex"/>
    <property type="evidence" value="ECO:0007669"/>
    <property type="project" value="TreeGrafter"/>
</dbReference>
<dbReference type="GO" id="GO:0042597">
    <property type="term" value="C:periplasmic space"/>
    <property type="evidence" value="ECO:0007669"/>
    <property type="project" value="UniProtKB-SubCell"/>
</dbReference>
<dbReference type="GO" id="GO:0051539">
    <property type="term" value="F:4 iron, 4 sulfur cluster binding"/>
    <property type="evidence" value="ECO:0007669"/>
    <property type="project" value="UniProtKB-KW"/>
</dbReference>
<dbReference type="GO" id="GO:0009055">
    <property type="term" value="F:electron transfer activity"/>
    <property type="evidence" value="ECO:0007669"/>
    <property type="project" value="UniProtKB-UniRule"/>
</dbReference>
<dbReference type="GO" id="GO:0005506">
    <property type="term" value="F:iron ion binding"/>
    <property type="evidence" value="ECO:0007669"/>
    <property type="project" value="UniProtKB-UniRule"/>
</dbReference>
<dbReference type="GO" id="GO:0030151">
    <property type="term" value="F:molybdenum ion binding"/>
    <property type="evidence" value="ECO:0007669"/>
    <property type="project" value="InterPro"/>
</dbReference>
<dbReference type="GO" id="GO:0043546">
    <property type="term" value="F:molybdopterin cofactor binding"/>
    <property type="evidence" value="ECO:0007669"/>
    <property type="project" value="InterPro"/>
</dbReference>
<dbReference type="GO" id="GO:0050140">
    <property type="term" value="F:nitrate reductase (cytochrome) activity"/>
    <property type="evidence" value="ECO:0007669"/>
    <property type="project" value="UniProtKB-EC"/>
</dbReference>
<dbReference type="GO" id="GO:0045333">
    <property type="term" value="P:cellular respiration"/>
    <property type="evidence" value="ECO:0007669"/>
    <property type="project" value="UniProtKB-ARBA"/>
</dbReference>
<dbReference type="GO" id="GO:0006777">
    <property type="term" value="P:Mo-molybdopterin cofactor biosynthetic process"/>
    <property type="evidence" value="ECO:0007669"/>
    <property type="project" value="UniProtKB-UniRule"/>
</dbReference>
<dbReference type="GO" id="GO:0042128">
    <property type="term" value="P:nitrate assimilation"/>
    <property type="evidence" value="ECO:0007669"/>
    <property type="project" value="UniProtKB-UniRule"/>
</dbReference>
<dbReference type="CDD" id="cd02791">
    <property type="entry name" value="MopB_CT_Nitrate-R-NapA-like"/>
    <property type="match status" value="1"/>
</dbReference>
<dbReference type="CDD" id="cd02754">
    <property type="entry name" value="MopB_Nitrate-R-NapA-like"/>
    <property type="match status" value="1"/>
</dbReference>
<dbReference type="FunFam" id="2.40.40.20:FF:000005">
    <property type="entry name" value="Periplasmic nitrate reductase"/>
    <property type="match status" value="1"/>
</dbReference>
<dbReference type="Gene3D" id="2.40.40.20">
    <property type="match status" value="1"/>
</dbReference>
<dbReference type="Gene3D" id="3.30.200.210">
    <property type="match status" value="1"/>
</dbReference>
<dbReference type="Gene3D" id="3.40.50.740">
    <property type="match status" value="1"/>
</dbReference>
<dbReference type="Gene3D" id="3.40.228.10">
    <property type="entry name" value="Dimethylsulfoxide Reductase, domain 2"/>
    <property type="match status" value="1"/>
</dbReference>
<dbReference type="HAMAP" id="MF_01630">
    <property type="entry name" value="Nitrate_reduct_NapA"/>
    <property type="match status" value="1"/>
</dbReference>
<dbReference type="InterPro" id="IPR009010">
    <property type="entry name" value="Asp_de-COase-like_dom_sf"/>
</dbReference>
<dbReference type="InterPro" id="IPR041957">
    <property type="entry name" value="CT_Nitrate-R-NapA-like"/>
</dbReference>
<dbReference type="InterPro" id="IPR006657">
    <property type="entry name" value="MoPterin_dinucl-bd_dom"/>
</dbReference>
<dbReference type="InterPro" id="IPR006656">
    <property type="entry name" value="Mopterin_OxRdtase"/>
</dbReference>
<dbReference type="InterPro" id="IPR006963">
    <property type="entry name" value="Mopterin_OxRdtase_4Fe-4S_dom"/>
</dbReference>
<dbReference type="InterPro" id="IPR027467">
    <property type="entry name" value="MopterinOxRdtase_cofactor_BS"/>
</dbReference>
<dbReference type="InterPro" id="IPR010051">
    <property type="entry name" value="Periplasm_NO3_reductase_lsu"/>
</dbReference>
<dbReference type="InterPro" id="IPR050123">
    <property type="entry name" value="Prok_molybdopt-oxidoreductase"/>
</dbReference>
<dbReference type="InterPro" id="IPR006311">
    <property type="entry name" value="TAT_signal"/>
</dbReference>
<dbReference type="InterPro" id="IPR019546">
    <property type="entry name" value="TAT_signal_bac_arc"/>
</dbReference>
<dbReference type="NCBIfam" id="TIGR01706">
    <property type="entry name" value="NAPA"/>
    <property type="match status" value="1"/>
</dbReference>
<dbReference type="NCBIfam" id="NF010055">
    <property type="entry name" value="PRK13532.1"/>
    <property type="match status" value="1"/>
</dbReference>
<dbReference type="NCBIfam" id="TIGR01409">
    <property type="entry name" value="TAT_signal_seq"/>
    <property type="match status" value="1"/>
</dbReference>
<dbReference type="PANTHER" id="PTHR43105:SF11">
    <property type="entry name" value="PERIPLASMIC NITRATE REDUCTASE"/>
    <property type="match status" value="1"/>
</dbReference>
<dbReference type="PANTHER" id="PTHR43105">
    <property type="entry name" value="RESPIRATORY NITRATE REDUCTASE"/>
    <property type="match status" value="1"/>
</dbReference>
<dbReference type="Pfam" id="PF04879">
    <property type="entry name" value="Molybdop_Fe4S4"/>
    <property type="match status" value="1"/>
</dbReference>
<dbReference type="Pfam" id="PF00384">
    <property type="entry name" value="Molybdopterin"/>
    <property type="match status" value="1"/>
</dbReference>
<dbReference type="Pfam" id="PF01568">
    <property type="entry name" value="Molydop_binding"/>
    <property type="match status" value="1"/>
</dbReference>
<dbReference type="Pfam" id="PF10518">
    <property type="entry name" value="TAT_signal"/>
    <property type="match status" value="1"/>
</dbReference>
<dbReference type="PIRSF" id="PIRSF000144">
    <property type="entry name" value="CbbBc"/>
    <property type="match status" value="1"/>
</dbReference>
<dbReference type="SMART" id="SM00926">
    <property type="entry name" value="Molybdop_Fe4S4"/>
    <property type="match status" value="1"/>
</dbReference>
<dbReference type="SUPFAM" id="SSF50692">
    <property type="entry name" value="ADC-like"/>
    <property type="match status" value="1"/>
</dbReference>
<dbReference type="SUPFAM" id="SSF53706">
    <property type="entry name" value="Formate dehydrogenase/DMSO reductase, domains 1-3"/>
    <property type="match status" value="1"/>
</dbReference>
<dbReference type="PROSITE" id="PS51669">
    <property type="entry name" value="4FE4S_MOW_BIS_MGD"/>
    <property type="match status" value="1"/>
</dbReference>
<dbReference type="PROSITE" id="PS00551">
    <property type="entry name" value="MOLYBDOPTERIN_PROK_1"/>
    <property type="match status" value="1"/>
</dbReference>
<dbReference type="PROSITE" id="PS51318">
    <property type="entry name" value="TAT"/>
    <property type="match status" value="1"/>
</dbReference>
<evidence type="ECO:0000255" key="1">
    <source>
        <dbReference type="HAMAP-Rule" id="MF_01630"/>
    </source>
</evidence>
<keyword id="KW-0004">4Fe-4S</keyword>
<keyword id="KW-0249">Electron transport</keyword>
<keyword id="KW-0408">Iron</keyword>
<keyword id="KW-0411">Iron-sulfur</keyword>
<keyword id="KW-0479">Metal-binding</keyword>
<keyword id="KW-0500">Molybdenum</keyword>
<keyword id="KW-0534">Nitrate assimilation</keyword>
<keyword id="KW-0560">Oxidoreductase</keyword>
<keyword id="KW-0574">Periplasm</keyword>
<keyword id="KW-1185">Reference proteome</keyword>
<keyword id="KW-0732">Signal</keyword>
<keyword id="KW-0813">Transport</keyword>
<accession>B8F7K2</accession>